<protein>
    <recommendedName>
        <fullName>Transforming growth factor beta-3 proprotein</fullName>
    </recommendedName>
    <component>
        <recommendedName>
            <fullName>Latency-associated peptide</fullName>
            <shortName>LAP</shortName>
        </recommendedName>
    </component>
    <component>
        <recommendedName>
            <fullName>Transforming growth factor beta-3</fullName>
            <shortName>TGF-beta-3</shortName>
        </recommendedName>
    </component>
</protein>
<dbReference type="EMBL" id="X14150">
    <property type="protein sequence ID" value="CAA32363.1"/>
    <property type="molecule type" value="mRNA"/>
</dbReference>
<dbReference type="PIR" id="S01825">
    <property type="entry name" value="S01825"/>
</dbReference>
<dbReference type="RefSeq" id="NP_999363.1">
    <property type="nucleotide sequence ID" value="NM_214198.1"/>
</dbReference>
<dbReference type="BMRB" id="P15203"/>
<dbReference type="SMR" id="P15203"/>
<dbReference type="FunCoup" id="P15203">
    <property type="interactions" value="404"/>
</dbReference>
<dbReference type="STRING" id="9823.ENSSSCP00000030885"/>
<dbReference type="GlyCosmos" id="P15203">
    <property type="glycosylation" value="3 sites, No reported glycans"/>
</dbReference>
<dbReference type="GlyGen" id="P15203">
    <property type="glycosylation" value="3 sites"/>
</dbReference>
<dbReference type="PaxDb" id="9823-ENSSSCP00000030885"/>
<dbReference type="Ensembl" id="ENSSSCT00015109301.1">
    <property type="protein sequence ID" value="ENSSSCP00015046449.1"/>
    <property type="gene ID" value="ENSSSCG00015080409.1"/>
</dbReference>
<dbReference type="GeneID" id="397400"/>
<dbReference type="KEGG" id="ssc:397400"/>
<dbReference type="CTD" id="7043"/>
<dbReference type="eggNOG" id="KOG3900">
    <property type="taxonomic scope" value="Eukaryota"/>
</dbReference>
<dbReference type="HOGENOM" id="CLU_039840_0_0_1"/>
<dbReference type="InParanoid" id="P15203"/>
<dbReference type="OrthoDB" id="6092228at2759"/>
<dbReference type="Reactome" id="R-SSC-114608">
    <property type="pathway name" value="Platelet degranulation"/>
</dbReference>
<dbReference type="Reactome" id="R-SSC-2129379">
    <property type="pathway name" value="Molecules associated with elastic fibres"/>
</dbReference>
<dbReference type="Reactome" id="R-SSC-2173789">
    <property type="pathway name" value="TGF-beta receptor signaling activates SMADs"/>
</dbReference>
<dbReference type="Proteomes" id="UP000008227">
    <property type="component" value="Unplaced"/>
</dbReference>
<dbReference type="Proteomes" id="UP000314985">
    <property type="component" value="Unplaced"/>
</dbReference>
<dbReference type="Proteomes" id="UP000694570">
    <property type="component" value="Unplaced"/>
</dbReference>
<dbReference type="Proteomes" id="UP000694571">
    <property type="component" value="Unplaced"/>
</dbReference>
<dbReference type="Proteomes" id="UP000694720">
    <property type="component" value="Unplaced"/>
</dbReference>
<dbReference type="Proteomes" id="UP000694722">
    <property type="component" value="Unplaced"/>
</dbReference>
<dbReference type="Proteomes" id="UP000694723">
    <property type="component" value="Unplaced"/>
</dbReference>
<dbReference type="Proteomes" id="UP000694724">
    <property type="component" value="Unplaced"/>
</dbReference>
<dbReference type="Proteomes" id="UP000694725">
    <property type="component" value="Unplaced"/>
</dbReference>
<dbReference type="Proteomes" id="UP000694726">
    <property type="component" value="Unplaced"/>
</dbReference>
<dbReference type="Proteomes" id="UP000694727">
    <property type="component" value="Unplaced"/>
</dbReference>
<dbReference type="Proteomes" id="UP000694728">
    <property type="component" value="Unplaced"/>
</dbReference>
<dbReference type="GO" id="GO:0031012">
    <property type="term" value="C:extracellular matrix"/>
    <property type="evidence" value="ECO:0000250"/>
    <property type="project" value="AgBase"/>
</dbReference>
<dbReference type="GO" id="GO:0005615">
    <property type="term" value="C:extracellular space"/>
    <property type="evidence" value="ECO:0000318"/>
    <property type="project" value="GO_Central"/>
</dbReference>
<dbReference type="GO" id="GO:0005125">
    <property type="term" value="F:cytokine activity"/>
    <property type="evidence" value="ECO:0000318"/>
    <property type="project" value="GO_Central"/>
</dbReference>
<dbReference type="GO" id="GO:0008083">
    <property type="term" value="F:growth factor activity"/>
    <property type="evidence" value="ECO:0007669"/>
    <property type="project" value="UniProtKB-KW"/>
</dbReference>
<dbReference type="GO" id="GO:0042802">
    <property type="term" value="F:identical protein binding"/>
    <property type="evidence" value="ECO:0000250"/>
    <property type="project" value="AgBase"/>
</dbReference>
<dbReference type="GO" id="GO:0050431">
    <property type="term" value="F:transforming growth factor beta binding"/>
    <property type="evidence" value="ECO:0000250"/>
    <property type="project" value="AgBase"/>
</dbReference>
<dbReference type="GO" id="GO:0034713">
    <property type="term" value="F:type I transforming growth factor beta receptor binding"/>
    <property type="evidence" value="ECO:0000250"/>
    <property type="project" value="AgBase"/>
</dbReference>
<dbReference type="GO" id="GO:0005114">
    <property type="term" value="F:type II transforming growth factor beta receptor binding"/>
    <property type="evidence" value="ECO:0000250"/>
    <property type="project" value="AgBase"/>
</dbReference>
<dbReference type="GO" id="GO:0034714">
    <property type="term" value="F:type III transforming growth factor beta receptor binding"/>
    <property type="evidence" value="ECO:0000250"/>
    <property type="project" value="AgBase"/>
</dbReference>
<dbReference type="GO" id="GO:0045216">
    <property type="term" value="P:cell-cell junction organization"/>
    <property type="evidence" value="ECO:0000250"/>
    <property type="project" value="AgBase"/>
</dbReference>
<dbReference type="GO" id="GO:0070483">
    <property type="term" value="P:detection of hypoxia"/>
    <property type="evidence" value="ECO:0000250"/>
    <property type="project" value="AgBase"/>
</dbReference>
<dbReference type="GO" id="GO:0060325">
    <property type="term" value="P:face morphogenesis"/>
    <property type="evidence" value="ECO:0000250"/>
    <property type="project" value="AgBase"/>
</dbReference>
<dbReference type="GO" id="GO:0008285">
    <property type="term" value="P:negative regulation of cell population proliferation"/>
    <property type="evidence" value="ECO:0000250"/>
    <property type="project" value="AgBase"/>
</dbReference>
<dbReference type="GO" id="GO:0010936">
    <property type="term" value="P:negative regulation of macrophage cytokine production"/>
    <property type="evidence" value="ECO:0000250"/>
    <property type="project" value="AgBase"/>
</dbReference>
<dbReference type="GO" id="GO:0051781">
    <property type="term" value="P:positive regulation of cell division"/>
    <property type="evidence" value="ECO:0007669"/>
    <property type="project" value="UniProtKB-KW"/>
</dbReference>
<dbReference type="GO" id="GO:0008284">
    <property type="term" value="P:positive regulation of cell population proliferation"/>
    <property type="evidence" value="ECO:0000250"/>
    <property type="project" value="AgBase"/>
</dbReference>
<dbReference type="GO" id="GO:0032967">
    <property type="term" value="P:positive regulation of collagen biosynthetic process"/>
    <property type="evidence" value="ECO:0000250"/>
    <property type="project" value="AgBase"/>
</dbReference>
<dbReference type="GO" id="GO:0045893">
    <property type="term" value="P:positive regulation of DNA-templated transcription"/>
    <property type="evidence" value="ECO:0000250"/>
    <property type="project" value="AgBase"/>
</dbReference>
<dbReference type="GO" id="GO:0010718">
    <property type="term" value="P:positive regulation of epithelial to mesenchymal transition"/>
    <property type="evidence" value="ECO:0000250"/>
    <property type="project" value="AgBase"/>
</dbReference>
<dbReference type="GO" id="GO:0042127">
    <property type="term" value="P:regulation of cell population proliferation"/>
    <property type="evidence" value="ECO:0000318"/>
    <property type="project" value="GO_Central"/>
</dbReference>
<dbReference type="GO" id="GO:0001666">
    <property type="term" value="P:response to hypoxia"/>
    <property type="evidence" value="ECO:0000250"/>
    <property type="project" value="AgBase"/>
</dbReference>
<dbReference type="GO" id="GO:0032570">
    <property type="term" value="P:response to progesterone"/>
    <property type="evidence" value="ECO:0000250"/>
    <property type="project" value="AgBase"/>
</dbReference>
<dbReference type="GO" id="GO:0007435">
    <property type="term" value="P:salivary gland morphogenesis"/>
    <property type="evidence" value="ECO:0000250"/>
    <property type="project" value="AgBase"/>
</dbReference>
<dbReference type="GO" id="GO:0062009">
    <property type="term" value="P:secondary palate development"/>
    <property type="evidence" value="ECO:0000250"/>
    <property type="project" value="UniProtKB"/>
</dbReference>
<dbReference type="GO" id="GO:0007179">
    <property type="term" value="P:transforming growth factor beta receptor signaling pathway"/>
    <property type="evidence" value="ECO:0000250"/>
    <property type="project" value="AgBase"/>
</dbReference>
<dbReference type="CDD" id="cd19386">
    <property type="entry name" value="TGF_beta_TGFB3"/>
    <property type="match status" value="1"/>
</dbReference>
<dbReference type="FunFam" id="2.10.90.10:FF:000004">
    <property type="entry name" value="Transforming growth factor beta"/>
    <property type="match status" value="1"/>
</dbReference>
<dbReference type="FunFam" id="2.60.120.970:FF:000006">
    <property type="entry name" value="Transforming growth factor beta"/>
    <property type="match status" value="1"/>
</dbReference>
<dbReference type="Gene3D" id="2.60.120.970">
    <property type="match status" value="1"/>
</dbReference>
<dbReference type="Gene3D" id="2.10.90.10">
    <property type="entry name" value="Cystine-knot cytokines"/>
    <property type="match status" value="1"/>
</dbReference>
<dbReference type="InterPro" id="IPR029034">
    <property type="entry name" value="Cystine-knot_cytokine"/>
</dbReference>
<dbReference type="InterPro" id="IPR001839">
    <property type="entry name" value="TGF-b_C"/>
</dbReference>
<dbReference type="InterPro" id="IPR001111">
    <property type="entry name" value="TGF-b_propeptide"/>
</dbReference>
<dbReference type="InterPro" id="IPR016319">
    <property type="entry name" value="TGF-beta"/>
</dbReference>
<dbReference type="InterPro" id="IPR015615">
    <property type="entry name" value="TGF-beta-rel"/>
</dbReference>
<dbReference type="InterPro" id="IPR015618">
    <property type="entry name" value="TGFB3"/>
</dbReference>
<dbReference type="InterPro" id="IPR017948">
    <property type="entry name" value="TGFb_CS"/>
</dbReference>
<dbReference type="PANTHER" id="PTHR11848">
    <property type="entry name" value="TGF-BETA FAMILY"/>
    <property type="match status" value="1"/>
</dbReference>
<dbReference type="PANTHER" id="PTHR11848:SF34">
    <property type="entry name" value="TRANSFORMING GROWTH FACTOR BETA-3 PROPROTEIN"/>
    <property type="match status" value="1"/>
</dbReference>
<dbReference type="Pfam" id="PF00019">
    <property type="entry name" value="TGF_beta"/>
    <property type="match status" value="1"/>
</dbReference>
<dbReference type="Pfam" id="PF00688">
    <property type="entry name" value="TGFb_propeptide"/>
    <property type="match status" value="1"/>
</dbReference>
<dbReference type="PIRSF" id="PIRSF001787">
    <property type="entry name" value="TGF-beta"/>
    <property type="match status" value="1"/>
</dbReference>
<dbReference type="PRINTS" id="PR01423">
    <property type="entry name" value="TGFBETA"/>
</dbReference>
<dbReference type="PRINTS" id="PR01426">
    <property type="entry name" value="TGFBETA3"/>
</dbReference>
<dbReference type="SMART" id="SM00204">
    <property type="entry name" value="TGFB"/>
    <property type="match status" value="1"/>
</dbReference>
<dbReference type="SUPFAM" id="SSF57501">
    <property type="entry name" value="Cystine-knot cytokines"/>
    <property type="match status" value="1"/>
</dbReference>
<dbReference type="PROSITE" id="PS00250">
    <property type="entry name" value="TGF_BETA_1"/>
    <property type="match status" value="1"/>
</dbReference>
<dbReference type="PROSITE" id="PS51362">
    <property type="entry name" value="TGF_BETA_2"/>
    <property type="match status" value="1"/>
</dbReference>
<sequence>MHLQRALVVLALLNFATVSLSMSTCTTLDFDHIKRKRVEAIRGQILSKLRLTSPPDPSMLANIPTQVLDLYNSTRELLEEVHGERGDDCTQENTESEYYAKEIYKFDMIQGLEEHNDLAVCPKGITSKIFRFNVSSVEKNETNLFRAEFRVLRMPNPSSKRSEQRIELFQILQPDEHIAKQRYIDGKNLPTRGAAEWLSFDVTDTVREWLLRRESNLGLEISIHCPCHTFQPNGDILENIQEVMEIKFKGVDSEDDPGRGDLGRLKKKKEHSPHLILMMIPPDRLDNPGLGAQRKKRALDTNYCFRNLEENCCVRPLYIDFRQDLGWKWVHEPKGYYANFCSGPCPYLRSADTTHSSVLGLYNTLNPEASASPCCVPQDLEPLTILYYVGRTAKVEQLSNMVVKSCKCS</sequence>
<reference key="1">
    <citation type="journal article" date="1988" name="EMBO J.">
        <title>A new type of transforming growth factor-beta, TGF-beta 3.</title>
        <authorList>
            <person name="Derynck R."/>
            <person name="Lindquist P.B."/>
            <person name="Lee A."/>
            <person name="Wen D."/>
            <person name="Tamm J."/>
            <person name="Graycar J.L."/>
            <person name="Rhee L."/>
            <person name="Mason A.J."/>
            <person name="Miller D.A."/>
            <person name="Coffey R.J."/>
            <person name="Moses H.L."/>
            <person name="Chen E.Y."/>
        </authorList>
    </citation>
    <scope>NUCLEOTIDE SEQUENCE [MRNA]</scope>
    <source>
        <tissue>Ovary</tissue>
    </source>
</reference>
<gene>
    <name type="primary">TGFB3</name>
</gene>
<keyword id="KW-0165">Cleavage on pair of basic residues</keyword>
<keyword id="KW-1015">Disulfide bond</keyword>
<keyword id="KW-0272">Extracellular matrix</keyword>
<keyword id="KW-0325">Glycoprotein</keyword>
<keyword id="KW-0339">Growth factor</keyword>
<keyword id="KW-0497">Mitogen</keyword>
<keyword id="KW-1185">Reference proteome</keyword>
<keyword id="KW-0964">Secreted</keyword>
<keyword id="KW-0732">Signal</keyword>
<organism>
    <name type="scientific">Sus scrofa</name>
    <name type="common">Pig</name>
    <dbReference type="NCBI Taxonomy" id="9823"/>
    <lineage>
        <taxon>Eukaryota</taxon>
        <taxon>Metazoa</taxon>
        <taxon>Chordata</taxon>
        <taxon>Craniata</taxon>
        <taxon>Vertebrata</taxon>
        <taxon>Euteleostomi</taxon>
        <taxon>Mammalia</taxon>
        <taxon>Eutheria</taxon>
        <taxon>Laurasiatheria</taxon>
        <taxon>Artiodactyla</taxon>
        <taxon>Suina</taxon>
        <taxon>Suidae</taxon>
        <taxon>Sus</taxon>
    </lineage>
</organism>
<comment type="function">
    <text evidence="1 2">Transforming growth factor beta-3 proprotein: Precursor of the Latency-associated peptide (LAP) and Transforming growth factor beta-3 (TGF-beta-3) chains, which constitute the regulatory and active subunit of TGF-beta-3, respectively.</text>
</comment>
<comment type="function">
    <molecule>Latency-associated peptide</molecule>
    <text evidence="1 2 4">Required to maintain the Transforming growth factor beta-3 (TGF-beta-3) chain in a latent state during storage in extracellular matrix (By similarity). Associates non-covalently with TGF-beta-3 and regulates its activation via interaction with 'milieu molecules', such as LTBP1 and LRRC32/GARP, that control activation of TGF-beta-3 (By similarity). Interaction with integrins results in distortion of the Latency-associated peptide chain and subsequent release of the active TGF-beta-3 (By similarity).</text>
</comment>
<comment type="function">
    <text evidence="1 2 4">Transforming growth factor beta-3: Multifunctional protein that regulates embryogenesis and cell differentiation and is required in various processes such as secondary palate development (By similarity). Activation into mature form follows different steps: following cleavage of the proprotein in the Golgi apparatus, Latency-associated peptide (LAP) and Transforming growth factor beta-3 (TGF-beta-3) chains remain non-covalently linked rendering TGF-beta-3 inactive during storage in extracellular matrix (By similarity). At the same time, LAP chain interacts with 'milieu molecules', such as LTBP1 and LRRC32/GARP that control activation of TGF-beta-3 and maintain it in a latent state during storage in extracellular milieus (By similarity). TGF-beta-3 is released from LAP by integrins: integrin-binding results in distortion of the LAP chain and subsequent release of the active TGF-beta-3 (By similarity). Once activated following release of LAP, TGF-beta-3 acts by binding to TGF-beta receptors (TGFBR1 and TGFBR2), which transduce signal (By similarity).</text>
</comment>
<comment type="subunit">
    <text evidence="1 2 3 4">Interacts with ASPN (By similarity). Latency-associated peptide: Homodimer; disulfide-linked. Latency-associated peptide: Interacts with Transforming growth factor beta-3 (TGF-beta-3) chain; interaction is non-covalent and maintains (TGF-beta-3) in a latent state (By similarity). Latency-associated peptide: Interacts with LRRC32/GARP; leading to regulate activation of TGF-beta-3 and promote epithelial fusion during palate development (By similarity). Latency-associated peptide: Interacts (via cell attachment site) with integrins, leading to release of the active TGF-beta-3 (By similarity). Transforming growth factor beta-3: Homodimer; disulfide-linked (By similarity). Transforming growth factor beta-3: Interacts with TGF-beta receptors (TGFBR1 and TGFBR2), leading to signal transduction (By similarity).</text>
</comment>
<comment type="subcellular location">
    <molecule>Latency-associated peptide</molecule>
    <subcellularLocation>
        <location evidence="1">Secreted</location>
        <location evidence="1">Extracellular space</location>
        <location evidence="1">Extracellular matrix</location>
    </subcellularLocation>
</comment>
<comment type="subcellular location">
    <molecule>Transforming growth factor beta-3</molecule>
    <subcellularLocation>
        <location evidence="1">Secreted</location>
    </subcellularLocation>
</comment>
<comment type="PTM">
    <text evidence="1">Transforming growth factor beta-3 proprotein: The precursor proprotein is cleaved in the Golgi apparatus to form Transforming growth factor beta-3 (TGF-beta-3) and Latency-associated peptide (LAP) chains, which remain non-covalently linked, rendering TGF-beta-3 inactive.</text>
</comment>
<comment type="similarity">
    <text evidence="6">Belongs to the TGF-beta family.</text>
</comment>
<accession>P15203</accession>
<evidence type="ECO:0000250" key="1">
    <source>
        <dbReference type="UniProtKB" id="P01137"/>
    </source>
</evidence>
<evidence type="ECO:0000250" key="2">
    <source>
        <dbReference type="UniProtKB" id="P04202"/>
    </source>
</evidence>
<evidence type="ECO:0000250" key="3">
    <source>
        <dbReference type="UniProtKB" id="P10600"/>
    </source>
</evidence>
<evidence type="ECO:0000250" key="4">
    <source>
        <dbReference type="UniProtKB" id="P17125"/>
    </source>
</evidence>
<evidence type="ECO:0000255" key="5"/>
<evidence type="ECO:0000305" key="6"/>
<proteinExistence type="evidence at transcript level"/>
<name>TGFB3_PIG</name>
<feature type="signal peptide" evidence="5">
    <location>
        <begin position="1"/>
        <end position="21"/>
    </location>
</feature>
<feature type="chain" id="PRO_0000033800" description="Latency-associated peptide" evidence="1">
    <location>
        <begin position="22"/>
        <end position="297"/>
    </location>
</feature>
<feature type="chain" id="PRO_0000033801" description="Transforming growth factor beta-3" evidence="1">
    <location>
        <begin position="298"/>
        <end position="409"/>
    </location>
</feature>
<feature type="short sequence motif" description="Cell attachment site" evidence="1">
    <location>
        <begin position="259"/>
        <end position="261"/>
    </location>
</feature>
<feature type="glycosylation site" description="N-linked (GlcNAc...) asparagine" evidence="5">
    <location>
        <position position="72"/>
    </location>
</feature>
<feature type="glycosylation site" description="N-linked (GlcNAc...) asparagine" evidence="5">
    <location>
        <position position="133"/>
    </location>
</feature>
<feature type="glycosylation site" description="N-linked (GlcNAc...) asparagine" evidence="5">
    <location>
        <position position="140"/>
    </location>
</feature>
<feature type="disulfide bond" evidence="3">
    <location>
        <begin position="304"/>
        <end position="313"/>
    </location>
</feature>
<feature type="disulfide bond" evidence="3">
    <location>
        <begin position="312"/>
        <end position="375"/>
    </location>
</feature>
<feature type="disulfide bond" evidence="3">
    <location>
        <begin position="341"/>
        <end position="406"/>
    </location>
</feature>
<feature type="disulfide bond" evidence="3">
    <location>
        <begin position="345"/>
        <end position="408"/>
    </location>
</feature>
<feature type="disulfide bond" description="Interchain" evidence="3">
    <location>
        <position position="374"/>
    </location>
</feature>